<keyword id="KW-0012">Acyltransferase</keyword>
<keyword id="KW-0963">Cytoplasm</keyword>
<keyword id="KW-0408">Iron</keyword>
<keyword id="KW-0479">Metal-binding</keyword>
<keyword id="KW-0808">Transferase</keyword>
<keyword id="KW-0819">tRNA processing</keyword>
<proteinExistence type="inferred from homology"/>
<sequence length="337" mass="36007">MRVLGIETSCDETGIAIYDDEKGLLANQLYSQVKLHADYGGVVPELASRDHVRKTVPLIQAALKESGLTAKDIDAVAYTAGPGLVGALLVGATVGRSLAFAWNVPAIPVHHMEGHLLAPMLEDNPPEFPFVALLVSGGHTQLISVTGIGQYELLGESIDDAAGEAFDKTAKLLGLDYPGGPLLSKMAAQGTAGRFVFPRPMTDRPGLDFSFSGLKTFAANTIRDNGTDDQTRADIARAFEDAVVDTLMIKCKRALDQTGFKRLVMAGGVSANRTLRAKLAEMMKKRRGEVFYARPEFCTDNGAMIAYAGMVRFKAGATADLGVSVRPRWPLAELPAA</sequence>
<reference key="1">
    <citation type="journal article" date="2008" name="J. Bacteriol.">
        <title>The pangenome structure of Escherichia coli: comparative genomic analysis of E. coli commensal and pathogenic isolates.</title>
        <authorList>
            <person name="Rasko D.A."/>
            <person name="Rosovitz M.J."/>
            <person name="Myers G.S.A."/>
            <person name="Mongodin E.F."/>
            <person name="Fricke W.F."/>
            <person name="Gajer P."/>
            <person name="Crabtree J."/>
            <person name="Sebaihia M."/>
            <person name="Thomson N.R."/>
            <person name="Chaudhuri R."/>
            <person name="Henderson I.R."/>
            <person name="Sperandio V."/>
            <person name="Ravel J."/>
        </authorList>
    </citation>
    <scope>NUCLEOTIDE SEQUENCE [LARGE SCALE GENOMIC DNA]</scope>
    <source>
        <strain>HS</strain>
    </source>
</reference>
<protein>
    <recommendedName>
        <fullName evidence="1">tRNA N6-adenosine threonylcarbamoyltransferase</fullName>
        <ecNumber evidence="1">2.3.1.234</ecNumber>
    </recommendedName>
    <alternativeName>
        <fullName evidence="1">N6-L-threonylcarbamoyladenine synthase</fullName>
        <shortName evidence="1">t(6)A synthase</shortName>
    </alternativeName>
    <alternativeName>
        <fullName evidence="1">t(6)A37 threonylcarbamoyladenosine biosynthesis protein TsaD</fullName>
    </alternativeName>
    <alternativeName>
        <fullName evidence="1">tRNA threonylcarbamoyladenosine biosynthesis protein TsaD</fullName>
    </alternativeName>
</protein>
<evidence type="ECO:0000255" key="1">
    <source>
        <dbReference type="HAMAP-Rule" id="MF_01445"/>
    </source>
</evidence>
<organism>
    <name type="scientific">Escherichia coli O9:H4 (strain HS)</name>
    <dbReference type="NCBI Taxonomy" id="331112"/>
    <lineage>
        <taxon>Bacteria</taxon>
        <taxon>Pseudomonadati</taxon>
        <taxon>Pseudomonadota</taxon>
        <taxon>Gammaproteobacteria</taxon>
        <taxon>Enterobacterales</taxon>
        <taxon>Enterobacteriaceae</taxon>
        <taxon>Escherichia</taxon>
    </lineage>
</organism>
<name>TSAD_ECOHS</name>
<comment type="function">
    <text evidence="1">Required for the formation of a threonylcarbamoyl group on adenosine at position 37 (t(6)A37) in tRNAs that read codons beginning with adenine. Is involved in the transfer of the threonylcarbamoyl moiety of threonylcarbamoyl-AMP (TC-AMP) to the N6 group of A37, together with TsaE and TsaB. TsaD likely plays a direct catalytic role in this reaction.</text>
</comment>
<comment type="catalytic activity">
    <reaction evidence="1">
        <text>L-threonylcarbamoyladenylate + adenosine(37) in tRNA = N(6)-L-threonylcarbamoyladenosine(37) in tRNA + AMP + H(+)</text>
        <dbReference type="Rhea" id="RHEA:37059"/>
        <dbReference type="Rhea" id="RHEA-COMP:10162"/>
        <dbReference type="Rhea" id="RHEA-COMP:10163"/>
        <dbReference type="ChEBI" id="CHEBI:15378"/>
        <dbReference type="ChEBI" id="CHEBI:73682"/>
        <dbReference type="ChEBI" id="CHEBI:74411"/>
        <dbReference type="ChEBI" id="CHEBI:74418"/>
        <dbReference type="ChEBI" id="CHEBI:456215"/>
        <dbReference type="EC" id="2.3.1.234"/>
    </reaction>
</comment>
<comment type="cofactor">
    <cofactor evidence="1">
        <name>Fe(2+)</name>
        <dbReference type="ChEBI" id="CHEBI:29033"/>
    </cofactor>
    <text evidence="1">Binds 1 Fe(2+) ion per subunit.</text>
</comment>
<comment type="subcellular location">
    <subcellularLocation>
        <location evidence="1">Cytoplasm</location>
    </subcellularLocation>
</comment>
<comment type="similarity">
    <text evidence="1">Belongs to the KAE1 / TsaD family.</text>
</comment>
<gene>
    <name evidence="1" type="primary">tsaD</name>
    <name type="synonym">gcp</name>
    <name type="ordered locus">EcHS_A3244</name>
</gene>
<feature type="chain" id="PRO_1000068571" description="tRNA N6-adenosine threonylcarbamoyltransferase">
    <location>
        <begin position="1"/>
        <end position="337"/>
    </location>
</feature>
<feature type="binding site" evidence="1">
    <location>
        <position position="111"/>
    </location>
    <ligand>
        <name>Fe cation</name>
        <dbReference type="ChEBI" id="CHEBI:24875"/>
    </ligand>
</feature>
<feature type="binding site" evidence="1">
    <location>
        <position position="115"/>
    </location>
    <ligand>
        <name>Fe cation</name>
        <dbReference type="ChEBI" id="CHEBI:24875"/>
    </ligand>
</feature>
<feature type="binding site" evidence="1">
    <location>
        <begin position="134"/>
        <end position="138"/>
    </location>
    <ligand>
        <name>substrate</name>
    </ligand>
</feature>
<feature type="binding site" evidence="1">
    <location>
        <position position="167"/>
    </location>
    <ligand>
        <name>substrate</name>
    </ligand>
</feature>
<feature type="binding site" evidence="1">
    <location>
        <position position="180"/>
    </location>
    <ligand>
        <name>substrate</name>
    </ligand>
</feature>
<feature type="binding site" evidence="1">
    <location>
        <position position="272"/>
    </location>
    <ligand>
        <name>substrate</name>
    </ligand>
</feature>
<feature type="binding site" evidence="1">
    <location>
        <position position="300"/>
    </location>
    <ligand>
        <name>Fe cation</name>
        <dbReference type="ChEBI" id="CHEBI:24875"/>
    </ligand>
</feature>
<accession>A8A4M1</accession>
<dbReference type="EC" id="2.3.1.234" evidence="1"/>
<dbReference type="EMBL" id="CP000802">
    <property type="protein sequence ID" value="ABV07475.1"/>
    <property type="molecule type" value="Genomic_DNA"/>
</dbReference>
<dbReference type="RefSeq" id="WP_001264365.1">
    <property type="nucleotide sequence ID" value="NC_009800.1"/>
</dbReference>
<dbReference type="SMR" id="A8A4M1"/>
<dbReference type="GeneID" id="93778929"/>
<dbReference type="KEGG" id="ecx:EcHS_A3244"/>
<dbReference type="HOGENOM" id="CLU_023208_0_2_6"/>
<dbReference type="GO" id="GO:0005737">
    <property type="term" value="C:cytoplasm"/>
    <property type="evidence" value="ECO:0007669"/>
    <property type="project" value="UniProtKB-SubCell"/>
</dbReference>
<dbReference type="GO" id="GO:0005506">
    <property type="term" value="F:iron ion binding"/>
    <property type="evidence" value="ECO:0007669"/>
    <property type="project" value="UniProtKB-UniRule"/>
</dbReference>
<dbReference type="GO" id="GO:0061711">
    <property type="term" value="F:N(6)-L-threonylcarbamoyladenine synthase activity"/>
    <property type="evidence" value="ECO:0007669"/>
    <property type="project" value="UniProtKB-EC"/>
</dbReference>
<dbReference type="GO" id="GO:0002949">
    <property type="term" value="P:tRNA threonylcarbamoyladenosine modification"/>
    <property type="evidence" value="ECO:0007669"/>
    <property type="project" value="UniProtKB-UniRule"/>
</dbReference>
<dbReference type="CDD" id="cd24097">
    <property type="entry name" value="ASKHA_NBD_TsaD-like"/>
    <property type="match status" value="1"/>
</dbReference>
<dbReference type="FunFam" id="3.30.420.40:FF:000031">
    <property type="entry name" value="tRNA N6-adenosine threonylcarbamoyltransferase"/>
    <property type="match status" value="1"/>
</dbReference>
<dbReference type="Gene3D" id="3.30.420.40">
    <property type="match status" value="2"/>
</dbReference>
<dbReference type="HAMAP" id="MF_01445">
    <property type="entry name" value="TsaD"/>
    <property type="match status" value="1"/>
</dbReference>
<dbReference type="InterPro" id="IPR043129">
    <property type="entry name" value="ATPase_NBD"/>
</dbReference>
<dbReference type="InterPro" id="IPR000905">
    <property type="entry name" value="Gcp-like_dom"/>
</dbReference>
<dbReference type="InterPro" id="IPR017861">
    <property type="entry name" value="KAE1/TsaD"/>
</dbReference>
<dbReference type="InterPro" id="IPR017860">
    <property type="entry name" value="Peptidase_M22_CS"/>
</dbReference>
<dbReference type="InterPro" id="IPR022450">
    <property type="entry name" value="TsaD"/>
</dbReference>
<dbReference type="NCBIfam" id="TIGR00329">
    <property type="entry name" value="gcp_kae1"/>
    <property type="match status" value="1"/>
</dbReference>
<dbReference type="NCBIfam" id="TIGR03723">
    <property type="entry name" value="T6A_TsaD_YgjD"/>
    <property type="match status" value="1"/>
</dbReference>
<dbReference type="PANTHER" id="PTHR11735">
    <property type="entry name" value="TRNA N6-ADENOSINE THREONYLCARBAMOYLTRANSFERASE"/>
    <property type="match status" value="1"/>
</dbReference>
<dbReference type="PANTHER" id="PTHR11735:SF6">
    <property type="entry name" value="TRNA N6-ADENOSINE THREONYLCARBAMOYLTRANSFERASE, MITOCHONDRIAL"/>
    <property type="match status" value="1"/>
</dbReference>
<dbReference type="Pfam" id="PF00814">
    <property type="entry name" value="TsaD"/>
    <property type="match status" value="1"/>
</dbReference>
<dbReference type="PRINTS" id="PR00789">
    <property type="entry name" value="OSIALOPTASE"/>
</dbReference>
<dbReference type="SUPFAM" id="SSF53067">
    <property type="entry name" value="Actin-like ATPase domain"/>
    <property type="match status" value="1"/>
</dbReference>
<dbReference type="PROSITE" id="PS01016">
    <property type="entry name" value="GLYCOPROTEASE"/>
    <property type="match status" value="1"/>
</dbReference>